<accession>P0DA52</accession>
<accession>Q8K7W6</accession>
<reference key="1">
    <citation type="journal article" date="2002" name="Proc. Natl. Acad. Sci. U.S.A.">
        <title>Genome sequence of a serotype M3 strain of group A Streptococcus: phage-encoded toxins, the high-virulence phenotype, and clone emergence.</title>
        <authorList>
            <person name="Beres S.B."/>
            <person name="Sylva G.L."/>
            <person name="Barbian K.D."/>
            <person name="Lei B."/>
            <person name="Hoff J.S."/>
            <person name="Mammarella N.D."/>
            <person name="Liu M.-Y."/>
            <person name="Smoot J.C."/>
            <person name="Porcella S.F."/>
            <person name="Parkins L.D."/>
            <person name="Campbell D.S."/>
            <person name="Smith T.M."/>
            <person name="McCormick J.K."/>
            <person name="Leung D.Y.M."/>
            <person name="Schlievert P.M."/>
            <person name="Musser J.M."/>
        </authorList>
    </citation>
    <scope>NUCLEOTIDE SEQUENCE [LARGE SCALE GENOMIC DNA]</scope>
    <source>
        <strain>ATCC BAA-595 / MGAS315</strain>
    </source>
</reference>
<protein>
    <recommendedName>
        <fullName>DegV domain-containing protein SpyM3_0586</fullName>
    </recommendedName>
</protein>
<dbReference type="EMBL" id="AE014074">
    <property type="protein sequence ID" value="AAM79193.1"/>
    <property type="molecule type" value="Genomic_DNA"/>
</dbReference>
<dbReference type="RefSeq" id="WP_011054370.1">
    <property type="nucleotide sequence ID" value="NC_004070.1"/>
</dbReference>
<dbReference type="SMR" id="P0DA52"/>
<dbReference type="KEGG" id="spg:SpyM3_0586"/>
<dbReference type="HOGENOM" id="CLU_048251_3_1_9"/>
<dbReference type="Proteomes" id="UP000000564">
    <property type="component" value="Chromosome"/>
</dbReference>
<dbReference type="GO" id="GO:0008289">
    <property type="term" value="F:lipid binding"/>
    <property type="evidence" value="ECO:0007669"/>
    <property type="project" value="UniProtKB-KW"/>
</dbReference>
<dbReference type="Gene3D" id="3.30.1180.10">
    <property type="match status" value="1"/>
</dbReference>
<dbReference type="Gene3D" id="3.40.50.10170">
    <property type="match status" value="1"/>
</dbReference>
<dbReference type="InterPro" id="IPR003797">
    <property type="entry name" value="DegV"/>
</dbReference>
<dbReference type="InterPro" id="IPR043168">
    <property type="entry name" value="DegV_C"/>
</dbReference>
<dbReference type="InterPro" id="IPR050270">
    <property type="entry name" value="DegV_domain_contain"/>
</dbReference>
<dbReference type="NCBIfam" id="TIGR00762">
    <property type="entry name" value="DegV"/>
    <property type="match status" value="1"/>
</dbReference>
<dbReference type="PANTHER" id="PTHR33434">
    <property type="entry name" value="DEGV DOMAIN-CONTAINING PROTEIN DR_1986-RELATED"/>
    <property type="match status" value="1"/>
</dbReference>
<dbReference type="PANTHER" id="PTHR33434:SF2">
    <property type="entry name" value="FATTY ACID-BINDING PROTEIN TM_1468"/>
    <property type="match status" value="1"/>
</dbReference>
<dbReference type="Pfam" id="PF02645">
    <property type="entry name" value="DegV"/>
    <property type="match status" value="1"/>
</dbReference>
<dbReference type="SUPFAM" id="SSF82549">
    <property type="entry name" value="DAK1/DegV-like"/>
    <property type="match status" value="1"/>
</dbReference>
<dbReference type="PROSITE" id="PS51482">
    <property type="entry name" value="DEGV"/>
    <property type="match status" value="1"/>
</dbReference>
<feature type="chain" id="PRO_0000209801" description="DegV domain-containing protein SpyM3_0586">
    <location>
        <begin position="1"/>
        <end position="282"/>
    </location>
</feature>
<feature type="domain" description="DegV" evidence="3">
    <location>
        <begin position="3"/>
        <end position="280"/>
    </location>
</feature>
<feature type="binding site" evidence="2">
    <location>
        <position position="61"/>
    </location>
    <ligand>
        <name>hexadecanoate</name>
        <dbReference type="ChEBI" id="CHEBI:7896"/>
    </ligand>
</feature>
<feature type="binding site" evidence="2">
    <location>
        <position position="94"/>
    </location>
    <ligand>
        <name>hexadecanoate</name>
        <dbReference type="ChEBI" id="CHEBI:7896"/>
    </ligand>
</feature>
<sequence length="282" mass="31290">MKLAVITDSTATLPIDLKQDKAIFSLDIPVIIDDETYFEGRNLSIDDFYQKMADSKNLPKTSQPSLSELDNLLGLLSSKGYTHVIGLFLAGGISGFWQNIQFLAEEHPEIEMAFPDSKITSAPLGSMVKNVLDWSRQGMTFQAILNKLQEQIDGTTAFIMVDDLNHLVKGGRLSNGSALLGNLLSIKPILRFDEEGKIVVYEKVRTEKKAMKRLVEILNDLIADGQYNVSIIHSKAQDKADYLKRLLQDSGYQYDIEEVHFGAVIATHLGEGAIAFGVTPRL</sequence>
<gene>
    <name type="ordered locus">SpyM3_0586</name>
</gene>
<evidence type="ECO:0000250" key="1"/>
<evidence type="ECO:0000250" key="2">
    <source>
        <dbReference type="UniProtKB" id="Q9X1H9"/>
    </source>
</evidence>
<evidence type="ECO:0000255" key="3">
    <source>
        <dbReference type="PROSITE-ProRule" id="PRU00815"/>
    </source>
</evidence>
<organism>
    <name type="scientific">Streptococcus pyogenes serotype M3 (strain ATCC BAA-595 / MGAS315)</name>
    <dbReference type="NCBI Taxonomy" id="198466"/>
    <lineage>
        <taxon>Bacteria</taxon>
        <taxon>Bacillati</taxon>
        <taxon>Bacillota</taxon>
        <taxon>Bacilli</taxon>
        <taxon>Lactobacillales</taxon>
        <taxon>Streptococcaceae</taxon>
        <taxon>Streptococcus</taxon>
    </lineage>
</organism>
<proteinExistence type="inferred from homology"/>
<keyword id="KW-0446">Lipid-binding</keyword>
<name>Y586_STRP3</name>
<comment type="function">
    <text evidence="1">May bind long-chain fatty acids, such as palmitate, and may play a role in lipid transport or fatty acid metabolism.</text>
</comment>